<organism>
    <name type="scientific">Lachnoclostridium phytofermentans (strain ATCC 700394 / DSM 18823 / ISDg)</name>
    <name type="common">Clostridium phytofermentans</name>
    <dbReference type="NCBI Taxonomy" id="357809"/>
    <lineage>
        <taxon>Bacteria</taxon>
        <taxon>Bacillati</taxon>
        <taxon>Bacillota</taxon>
        <taxon>Clostridia</taxon>
        <taxon>Lachnospirales</taxon>
        <taxon>Lachnospiraceae</taxon>
    </lineage>
</organism>
<comment type="function">
    <text evidence="1">Produces ATP from ADP in the presence of a proton gradient across the membrane. The gamma chain is believed to be important in regulating ATPase activity and the flow of protons through the CF(0) complex.</text>
</comment>
<comment type="subunit">
    <text evidence="1">F-type ATPases have 2 components, CF(1) - the catalytic core - and CF(0) - the membrane proton channel. CF(1) has five subunits: alpha(3), beta(3), gamma(1), delta(1), epsilon(1). CF(0) has three main subunits: a, b and c.</text>
</comment>
<comment type="subcellular location">
    <subcellularLocation>
        <location evidence="1">Cell membrane</location>
        <topology evidence="1">Peripheral membrane protein</topology>
    </subcellularLocation>
</comment>
<comment type="similarity">
    <text evidence="1">Belongs to the ATPase gamma chain family.</text>
</comment>
<proteinExistence type="inferred from homology"/>
<name>ATPG_LACP7</name>
<evidence type="ECO:0000255" key="1">
    <source>
        <dbReference type="HAMAP-Rule" id="MF_00815"/>
    </source>
</evidence>
<reference key="1">
    <citation type="submission" date="2007-11" db="EMBL/GenBank/DDBJ databases">
        <title>Complete genome sequence of Clostridium phytofermentans ISDg.</title>
        <authorList>
            <person name="Leschine S.B."/>
            <person name="Warnick T.A."/>
            <person name="Blanchard J.L."/>
            <person name="Schnell D.J."/>
            <person name="Petit E.L."/>
            <person name="LaTouf W.G."/>
            <person name="Copeland A."/>
            <person name="Lucas S."/>
            <person name="Lapidus A."/>
            <person name="Barry K."/>
            <person name="Glavina del Rio T."/>
            <person name="Dalin E."/>
            <person name="Tice H."/>
            <person name="Pitluck S."/>
            <person name="Kiss H."/>
            <person name="Brettin T."/>
            <person name="Bruce D."/>
            <person name="Detter J.C."/>
            <person name="Han C."/>
            <person name="Kuske C."/>
            <person name="Schmutz J."/>
            <person name="Larimer F."/>
            <person name="Land M."/>
            <person name="Hauser L."/>
            <person name="Kyrpides N."/>
            <person name="Kim E.A."/>
            <person name="Richardson P."/>
        </authorList>
    </citation>
    <scope>NUCLEOTIDE SEQUENCE [LARGE SCALE GENOMIC DNA]</scope>
    <source>
        <strain>ATCC 700394 / DSM 18823 / ISDg</strain>
    </source>
</reference>
<sequence>MASMRDIKRRKESIQSTGQITKAMKLVSTVKLQKAKSKAENAKPYFDHMYDTVLNMLRKSGNISHPYLSAGKSNKKAIIVITSNRGLAGGYNSNILKLVMSSDINKEDAVVYAVGRKGKEALARRGYHIAKDYSEVMNAPIYKDAIEIGKAVLDAFVADEVGEIYLAYTSFKNTVSHEPTLIKLLPVDMEAALQEGEKSEDLNERLTLMNYEPAAEEALNLIIPKYINSLIYGALVQALASENGARMQAMDSATNNAEDMISDLSLKYNRARQSSITQELTEIIAGANAIN</sequence>
<gene>
    <name evidence="1" type="primary">atpG</name>
    <name type="ordered locus">Cphy_3737</name>
</gene>
<keyword id="KW-0066">ATP synthesis</keyword>
<keyword id="KW-1003">Cell membrane</keyword>
<keyword id="KW-0139">CF(1)</keyword>
<keyword id="KW-0375">Hydrogen ion transport</keyword>
<keyword id="KW-0406">Ion transport</keyword>
<keyword id="KW-0472">Membrane</keyword>
<keyword id="KW-1185">Reference proteome</keyword>
<keyword id="KW-0813">Transport</keyword>
<protein>
    <recommendedName>
        <fullName evidence="1">ATP synthase gamma chain</fullName>
    </recommendedName>
    <alternativeName>
        <fullName evidence="1">ATP synthase F1 sector gamma subunit</fullName>
    </alternativeName>
    <alternativeName>
        <fullName evidence="1">F-ATPase gamma subunit</fullName>
    </alternativeName>
</protein>
<feature type="chain" id="PRO_1000213030" description="ATP synthase gamma chain">
    <location>
        <begin position="1"/>
        <end position="291"/>
    </location>
</feature>
<dbReference type="EMBL" id="CP000885">
    <property type="protein sequence ID" value="ABX44084.1"/>
    <property type="molecule type" value="Genomic_DNA"/>
</dbReference>
<dbReference type="RefSeq" id="WP_012201732.1">
    <property type="nucleotide sequence ID" value="NC_010001.1"/>
</dbReference>
<dbReference type="SMR" id="A9KK93"/>
<dbReference type="STRING" id="357809.Cphy_3737"/>
<dbReference type="KEGG" id="cpy:Cphy_3737"/>
<dbReference type="eggNOG" id="COG0224">
    <property type="taxonomic scope" value="Bacteria"/>
</dbReference>
<dbReference type="HOGENOM" id="CLU_050669_0_1_9"/>
<dbReference type="OrthoDB" id="9812769at2"/>
<dbReference type="Proteomes" id="UP000000370">
    <property type="component" value="Chromosome"/>
</dbReference>
<dbReference type="GO" id="GO:0005886">
    <property type="term" value="C:plasma membrane"/>
    <property type="evidence" value="ECO:0007669"/>
    <property type="project" value="UniProtKB-SubCell"/>
</dbReference>
<dbReference type="GO" id="GO:0045259">
    <property type="term" value="C:proton-transporting ATP synthase complex"/>
    <property type="evidence" value="ECO:0007669"/>
    <property type="project" value="UniProtKB-KW"/>
</dbReference>
<dbReference type="GO" id="GO:0005524">
    <property type="term" value="F:ATP binding"/>
    <property type="evidence" value="ECO:0007669"/>
    <property type="project" value="UniProtKB-UniRule"/>
</dbReference>
<dbReference type="GO" id="GO:0046933">
    <property type="term" value="F:proton-transporting ATP synthase activity, rotational mechanism"/>
    <property type="evidence" value="ECO:0007669"/>
    <property type="project" value="UniProtKB-UniRule"/>
</dbReference>
<dbReference type="GO" id="GO:0042777">
    <property type="term" value="P:proton motive force-driven plasma membrane ATP synthesis"/>
    <property type="evidence" value="ECO:0007669"/>
    <property type="project" value="UniProtKB-UniRule"/>
</dbReference>
<dbReference type="CDD" id="cd12151">
    <property type="entry name" value="F1-ATPase_gamma"/>
    <property type="match status" value="1"/>
</dbReference>
<dbReference type="FunFam" id="1.10.287.80:FF:000001">
    <property type="entry name" value="ATP synthase gamma chain"/>
    <property type="match status" value="1"/>
</dbReference>
<dbReference type="Gene3D" id="3.40.1380.10">
    <property type="match status" value="1"/>
</dbReference>
<dbReference type="Gene3D" id="1.10.287.80">
    <property type="entry name" value="ATP synthase, gamma subunit, helix hairpin domain"/>
    <property type="match status" value="1"/>
</dbReference>
<dbReference type="HAMAP" id="MF_00815">
    <property type="entry name" value="ATP_synth_gamma_bact"/>
    <property type="match status" value="1"/>
</dbReference>
<dbReference type="InterPro" id="IPR035968">
    <property type="entry name" value="ATP_synth_F1_ATPase_gsu"/>
</dbReference>
<dbReference type="InterPro" id="IPR000131">
    <property type="entry name" value="ATP_synth_F1_gsu"/>
</dbReference>
<dbReference type="InterPro" id="IPR023632">
    <property type="entry name" value="ATP_synth_F1_gsu_CS"/>
</dbReference>
<dbReference type="NCBIfam" id="TIGR01146">
    <property type="entry name" value="ATPsyn_F1gamma"/>
    <property type="match status" value="1"/>
</dbReference>
<dbReference type="PANTHER" id="PTHR11693">
    <property type="entry name" value="ATP SYNTHASE GAMMA CHAIN"/>
    <property type="match status" value="1"/>
</dbReference>
<dbReference type="PANTHER" id="PTHR11693:SF22">
    <property type="entry name" value="ATP SYNTHASE SUBUNIT GAMMA, MITOCHONDRIAL"/>
    <property type="match status" value="1"/>
</dbReference>
<dbReference type="Pfam" id="PF00231">
    <property type="entry name" value="ATP-synt"/>
    <property type="match status" value="1"/>
</dbReference>
<dbReference type="PRINTS" id="PR00126">
    <property type="entry name" value="ATPASEGAMMA"/>
</dbReference>
<dbReference type="SUPFAM" id="SSF52943">
    <property type="entry name" value="ATP synthase (F1-ATPase), gamma subunit"/>
    <property type="match status" value="1"/>
</dbReference>
<dbReference type="PROSITE" id="PS00153">
    <property type="entry name" value="ATPASE_GAMMA"/>
    <property type="match status" value="1"/>
</dbReference>
<accession>A9KK93</accession>